<name>CNIH4_HUMAN</name>
<proteinExistence type="evidence at protein level"/>
<evidence type="ECO:0000255" key="1"/>
<evidence type="ECO:0000269" key="2">
    <source>
    </source>
</evidence>
<evidence type="ECO:0000303" key="3">
    <source>
    </source>
</evidence>
<evidence type="ECO:0000303" key="4">
    <source>
    </source>
</evidence>
<evidence type="ECO:0000305" key="5"/>
<feature type="chain" id="PRO_0000122230" description="Protein cornichon homolog 4">
    <location>
        <begin position="1"/>
        <end position="139"/>
    </location>
</feature>
<feature type="transmembrane region" description="Helical" evidence="1">
    <location>
        <begin position="5"/>
        <end position="25"/>
    </location>
</feature>
<feature type="transmembrane region" description="Helical" evidence="1">
    <location>
        <begin position="57"/>
        <end position="77"/>
    </location>
</feature>
<feature type="transmembrane region" description="Helical" evidence="1">
    <location>
        <begin position="118"/>
        <end position="138"/>
    </location>
</feature>
<feature type="splice variant" id="VSP_013466" description="In isoform 2." evidence="3 4">
    <location>
        <begin position="85"/>
        <end position="131"/>
    </location>
</feature>
<feature type="sequence variant" id="VAR_048830" description="In dbSNP:rs12123896.">
    <original>A</original>
    <variation>G</variation>
    <location>
        <position position="3"/>
    </location>
</feature>
<reference key="1">
    <citation type="journal article" date="2000" name="Genome Res.">
        <title>Cloning and functional analysis of cDNAs with open reading frames for 300 previously undefined genes expressed in CD34+ hematopoietic stem/progenitor cells.</title>
        <authorList>
            <person name="Zhang Q.-H."/>
            <person name="Ye M."/>
            <person name="Wu X.-Y."/>
            <person name="Ren S.-X."/>
            <person name="Zhao M."/>
            <person name="Zhao C.-J."/>
            <person name="Fu G."/>
            <person name="Shen Y."/>
            <person name="Fan H.-Y."/>
            <person name="Lu G."/>
            <person name="Zhong M."/>
            <person name="Xu X.-R."/>
            <person name="Han Z.-G."/>
            <person name="Zhang J.-W."/>
            <person name="Tao J."/>
            <person name="Huang Q.-H."/>
            <person name="Zhou J."/>
            <person name="Hu G.-X."/>
            <person name="Gu J."/>
            <person name="Chen S.-J."/>
            <person name="Chen Z."/>
        </authorList>
    </citation>
    <scope>NUCLEOTIDE SEQUENCE [LARGE SCALE MRNA] (ISOFORM 1)</scope>
    <source>
        <tissue>Umbilical cord blood</tissue>
    </source>
</reference>
<reference key="2">
    <citation type="journal article" date="2001" name="Genome Res.">
        <title>Towards a catalog of human genes and proteins: sequencing and analysis of 500 novel complete protein coding human cDNAs.</title>
        <authorList>
            <person name="Wiemann S."/>
            <person name="Weil B."/>
            <person name="Wellenreuther R."/>
            <person name="Gassenhuber J."/>
            <person name="Glassl S."/>
            <person name="Ansorge W."/>
            <person name="Boecher M."/>
            <person name="Bloecker H."/>
            <person name="Bauersachs S."/>
            <person name="Blum H."/>
            <person name="Lauber J."/>
            <person name="Duesterhoeft A."/>
            <person name="Beyer A."/>
            <person name="Koehrer K."/>
            <person name="Strack N."/>
            <person name="Mewes H.-W."/>
            <person name="Ottenwaelder B."/>
            <person name="Obermaier B."/>
            <person name="Tampe J."/>
            <person name="Heubner D."/>
            <person name="Wambutt R."/>
            <person name="Korn B."/>
            <person name="Klein M."/>
            <person name="Poustka A."/>
        </authorList>
    </citation>
    <scope>NUCLEOTIDE SEQUENCE [LARGE SCALE MRNA] (ISOFORM 2)</scope>
    <source>
        <tissue>Uterus</tissue>
    </source>
</reference>
<reference key="3">
    <citation type="journal article" date="2004" name="Nat. Genet.">
        <title>Complete sequencing and characterization of 21,243 full-length human cDNAs.</title>
        <authorList>
            <person name="Ota T."/>
            <person name="Suzuki Y."/>
            <person name="Nishikawa T."/>
            <person name="Otsuki T."/>
            <person name="Sugiyama T."/>
            <person name="Irie R."/>
            <person name="Wakamatsu A."/>
            <person name="Hayashi K."/>
            <person name="Sato H."/>
            <person name="Nagai K."/>
            <person name="Kimura K."/>
            <person name="Makita H."/>
            <person name="Sekine M."/>
            <person name="Obayashi M."/>
            <person name="Nishi T."/>
            <person name="Shibahara T."/>
            <person name="Tanaka T."/>
            <person name="Ishii S."/>
            <person name="Yamamoto J."/>
            <person name="Saito K."/>
            <person name="Kawai Y."/>
            <person name="Isono Y."/>
            <person name="Nakamura Y."/>
            <person name="Nagahari K."/>
            <person name="Murakami K."/>
            <person name="Yasuda T."/>
            <person name="Iwayanagi T."/>
            <person name="Wagatsuma M."/>
            <person name="Shiratori A."/>
            <person name="Sudo H."/>
            <person name="Hosoiri T."/>
            <person name="Kaku Y."/>
            <person name="Kodaira H."/>
            <person name="Kondo H."/>
            <person name="Sugawara M."/>
            <person name="Takahashi M."/>
            <person name="Kanda K."/>
            <person name="Yokoi T."/>
            <person name="Furuya T."/>
            <person name="Kikkawa E."/>
            <person name="Omura Y."/>
            <person name="Abe K."/>
            <person name="Kamihara K."/>
            <person name="Katsuta N."/>
            <person name="Sato K."/>
            <person name="Tanikawa M."/>
            <person name="Yamazaki M."/>
            <person name="Ninomiya K."/>
            <person name="Ishibashi T."/>
            <person name="Yamashita H."/>
            <person name="Murakawa K."/>
            <person name="Fujimori K."/>
            <person name="Tanai H."/>
            <person name="Kimata M."/>
            <person name="Watanabe M."/>
            <person name="Hiraoka S."/>
            <person name="Chiba Y."/>
            <person name="Ishida S."/>
            <person name="Ono Y."/>
            <person name="Takiguchi S."/>
            <person name="Watanabe S."/>
            <person name="Yosida M."/>
            <person name="Hotuta T."/>
            <person name="Kusano J."/>
            <person name="Kanehori K."/>
            <person name="Takahashi-Fujii A."/>
            <person name="Hara H."/>
            <person name="Tanase T.-O."/>
            <person name="Nomura Y."/>
            <person name="Togiya S."/>
            <person name="Komai F."/>
            <person name="Hara R."/>
            <person name="Takeuchi K."/>
            <person name="Arita M."/>
            <person name="Imose N."/>
            <person name="Musashino K."/>
            <person name="Yuuki H."/>
            <person name="Oshima A."/>
            <person name="Sasaki N."/>
            <person name="Aotsuka S."/>
            <person name="Yoshikawa Y."/>
            <person name="Matsunawa H."/>
            <person name="Ichihara T."/>
            <person name="Shiohata N."/>
            <person name="Sano S."/>
            <person name="Moriya S."/>
            <person name="Momiyama H."/>
            <person name="Satoh N."/>
            <person name="Takami S."/>
            <person name="Terashima Y."/>
            <person name="Suzuki O."/>
            <person name="Nakagawa S."/>
            <person name="Senoh A."/>
            <person name="Mizoguchi H."/>
            <person name="Goto Y."/>
            <person name="Shimizu F."/>
            <person name="Wakebe H."/>
            <person name="Hishigaki H."/>
            <person name="Watanabe T."/>
            <person name="Sugiyama A."/>
            <person name="Takemoto M."/>
            <person name="Kawakami B."/>
            <person name="Yamazaki M."/>
            <person name="Watanabe K."/>
            <person name="Kumagai A."/>
            <person name="Itakura S."/>
            <person name="Fukuzumi Y."/>
            <person name="Fujimori Y."/>
            <person name="Komiyama M."/>
            <person name="Tashiro H."/>
            <person name="Tanigami A."/>
            <person name="Fujiwara T."/>
            <person name="Ono T."/>
            <person name="Yamada K."/>
            <person name="Fujii Y."/>
            <person name="Ozaki K."/>
            <person name="Hirao M."/>
            <person name="Ohmori Y."/>
            <person name="Kawabata A."/>
            <person name="Hikiji T."/>
            <person name="Kobatake N."/>
            <person name="Inagaki H."/>
            <person name="Ikema Y."/>
            <person name="Okamoto S."/>
            <person name="Okitani R."/>
            <person name="Kawakami T."/>
            <person name="Noguchi S."/>
            <person name="Itoh T."/>
            <person name="Shigeta K."/>
            <person name="Senba T."/>
            <person name="Matsumura K."/>
            <person name="Nakajima Y."/>
            <person name="Mizuno T."/>
            <person name="Morinaga M."/>
            <person name="Sasaki M."/>
            <person name="Togashi T."/>
            <person name="Oyama M."/>
            <person name="Hata H."/>
            <person name="Watanabe M."/>
            <person name="Komatsu T."/>
            <person name="Mizushima-Sugano J."/>
            <person name="Satoh T."/>
            <person name="Shirai Y."/>
            <person name="Takahashi Y."/>
            <person name="Nakagawa K."/>
            <person name="Okumura K."/>
            <person name="Nagase T."/>
            <person name="Nomura N."/>
            <person name="Kikuchi H."/>
            <person name="Masuho Y."/>
            <person name="Yamashita R."/>
            <person name="Nakai K."/>
            <person name="Yada T."/>
            <person name="Nakamura Y."/>
            <person name="Ohara O."/>
            <person name="Isogai T."/>
            <person name="Sugano S."/>
        </authorList>
    </citation>
    <scope>NUCLEOTIDE SEQUENCE [LARGE SCALE MRNA] (ISOFORMS 1 AND 2)</scope>
    <source>
        <tissue>Cerebellum</tissue>
        <tissue>Hippocampus</tissue>
    </source>
</reference>
<reference key="4">
    <citation type="submission" date="2005-07" db="EMBL/GenBank/DDBJ databases">
        <authorList>
            <person name="Mural R.J."/>
            <person name="Istrail S."/>
            <person name="Sutton G.G."/>
            <person name="Florea L."/>
            <person name="Halpern A.L."/>
            <person name="Mobarry C.M."/>
            <person name="Lippert R."/>
            <person name="Walenz B."/>
            <person name="Shatkay H."/>
            <person name="Dew I."/>
            <person name="Miller J.R."/>
            <person name="Flanigan M.J."/>
            <person name="Edwards N.J."/>
            <person name="Bolanos R."/>
            <person name="Fasulo D."/>
            <person name="Halldorsson B.V."/>
            <person name="Hannenhalli S."/>
            <person name="Turner R."/>
            <person name="Yooseph S."/>
            <person name="Lu F."/>
            <person name="Nusskern D.R."/>
            <person name="Shue B.C."/>
            <person name="Zheng X.H."/>
            <person name="Zhong F."/>
            <person name="Delcher A.L."/>
            <person name="Huson D.H."/>
            <person name="Kravitz S.A."/>
            <person name="Mouchard L."/>
            <person name="Reinert K."/>
            <person name="Remington K.A."/>
            <person name="Clark A.G."/>
            <person name="Waterman M.S."/>
            <person name="Eichler E.E."/>
            <person name="Adams M.D."/>
            <person name="Hunkapiller M.W."/>
            <person name="Myers E.W."/>
            <person name="Venter J.C."/>
        </authorList>
    </citation>
    <scope>NUCLEOTIDE SEQUENCE [LARGE SCALE GENOMIC DNA]</scope>
</reference>
<reference key="5">
    <citation type="journal article" date="2004" name="Genome Res.">
        <title>The status, quality, and expansion of the NIH full-length cDNA project: the Mammalian Gene Collection (MGC).</title>
        <authorList>
            <consortium name="The MGC Project Team"/>
        </authorList>
    </citation>
    <scope>NUCLEOTIDE SEQUENCE [LARGE SCALE MRNA] (ISOFORM 1)</scope>
    <source>
        <tissue>Brain</tissue>
    </source>
</reference>
<reference key="6">
    <citation type="journal article" date="2011" name="BMC Syst. Biol.">
        <title>Initial characterization of the human central proteome.</title>
        <authorList>
            <person name="Burkard T.R."/>
            <person name="Planyavsky M."/>
            <person name="Kaupe I."/>
            <person name="Breitwieser F.P."/>
            <person name="Buerckstuemmer T."/>
            <person name="Bennett K.L."/>
            <person name="Superti-Furga G."/>
            <person name="Colinge J."/>
        </authorList>
    </citation>
    <scope>IDENTIFICATION BY MASS SPECTROMETRY [LARGE SCALE ANALYSIS]</scope>
</reference>
<reference key="7">
    <citation type="journal article" date="2014" name="Traffic">
        <title>CNIH4 interacts with newly synthesized GPCR and controls their export from the endoplasmic reticulum.</title>
        <authorList>
            <person name="Sauvageau E."/>
            <person name="Rochdi M.D."/>
            <person name="Oueslati M."/>
            <person name="Hamdan F.F."/>
            <person name="Percherancier Y."/>
            <person name="Simpson J.C."/>
            <person name="Pepperkok R."/>
            <person name="Bouvier M."/>
        </authorList>
    </citation>
    <scope>FUNCTION</scope>
    <scope>SUBCELLULAR LOCATION</scope>
    <scope>INTERACTION WITH CCR5; ADRB2; SEC24B AND SEC24D</scope>
</reference>
<gene>
    <name type="primary">CNIH4</name>
    <name type="ORF">HSPC163</name>
</gene>
<sequence>MEAVVFVFSLLDCCALIFLSVYFIITLSDLECDYINARSCCSKLNKWVIPELIGHTIVTVLLLMSLHWFIFLLNLPVATWNIYRYIMVPSGNMGVFDPTEIHNRGQLKSHMKEAMIKLGFHLLCFFMYLYSMILALIND</sequence>
<dbReference type="EMBL" id="AF161512">
    <property type="protein sequence ID" value="AAF29127.1"/>
    <property type="molecule type" value="mRNA"/>
</dbReference>
<dbReference type="EMBL" id="AL136930">
    <property type="protein sequence ID" value="CAB66864.1"/>
    <property type="molecule type" value="mRNA"/>
</dbReference>
<dbReference type="EMBL" id="AK289973">
    <property type="protein sequence ID" value="BAF82662.1"/>
    <property type="molecule type" value="mRNA"/>
</dbReference>
<dbReference type="EMBL" id="AK312064">
    <property type="protein sequence ID" value="BAG35000.1"/>
    <property type="molecule type" value="mRNA"/>
</dbReference>
<dbReference type="EMBL" id="CH471098">
    <property type="protein sequence ID" value="EAW69717.1"/>
    <property type="molecule type" value="Genomic_DNA"/>
</dbReference>
<dbReference type="EMBL" id="CH471098">
    <property type="protein sequence ID" value="EAW69719.1"/>
    <property type="molecule type" value="Genomic_DNA"/>
</dbReference>
<dbReference type="EMBL" id="BC000573">
    <property type="protein sequence ID" value="AAH00573.1"/>
    <property type="molecule type" value="mRNA"/>
</dbReference>
<dbReference type="CCDS" id="CCDS1543.1">
    <molecule id="Q9P003-1"/>
</dbReference>
<dbReference type="CCDS" id="CCDS60430.1">
    <molecule id="Q9P003-2"/>
</dbReference>
<dbReference type="RefSeq" id="NP_001264126.1">
    <molecule id="Q9P003-2"/>
    <property type="nucleotide sequence ID" value="NM_001277197.2"/>
</dbReference>
<dbReference type="RefSeq" id="NP_054903.1">
    <molecule id="Q9P003-1"/>
    <property type="nucleotide sequence ID" value="NM_014184.4"/>
</dbReference>
<dbReference type="SMR" id="Q9P003"/>
<dbReference type="BioGRID" id="118865">
    <property type="interactions" value="76"/>
</dbReference>
<dbReference type="CORUM" id="Q9P003"/>
<dbReference type="FunCoup" id="Q9P003">
    <property type="interactions" value="1662"/>
</dbReference>
<dbReference type="IntAct" id="Q9P003">
    <property type="interactions" value="13"/>
</dbReference>
<dbReference type="STRING" id="9606.ENSP00000420443"/>
<dbReference type="GlyGen" id="Q9P003">
    <property type="glycosylation" value="1 site, 1 O-linked glycan (1 site)"/>
</dbReference>
<dbReference type="MetOSite" id="Q9P003"/>
<dbReference type="SwissPalm" id="Q9P003"/>
<dbReference type="BioMuta" id="CNIH4"/>
<dbReference type="DMDM" id="12229837"/>
<dbReference type="jPOST" id="Q9P003"/>
<dbReference type="MassIVE" id="Q9P003"/>
<dbReference type="PaxDb" id="9606-ENSP00000420443"/>
<dbReference type="PeptideAtlas" id="Q9P003"/>
<dbReference type="ProteomicsDB" id="83530">
    <molecule id="Q9P003-1"/>
</dbReference>
<dbReference type="ProteomicsDB" id="83531">
    <molecule id="Q9P003-2"/>
</dbReference>
<dbReference type="Pumba" id="Q9P003"/>
<dbReference type="Antibodypedia" id="34638">
    <property type="antibodies" value="74 antibodies from 16 providers"/>
</dbReference>
<dbReference type="DNASU" id="29097"/>
<dbReference type="Ensembl" id="ENST00000366857.9">
    <molecule id="Q9P003-2"/>
    <property type="protein sequence ID" value="ENSP00000355822.5"/>
    <property type="gene ID" value="ENSG00000143771.12"/>
</dbReference>
<dbReference type="Ensembl" id="ENST00000465271.6">
    <molecule id="Q9P003-1"/>
    <property type="protein sequence ID" value="ENSP00000420443.1"/>
    <property type="gene ID" value="ENSG00000143771.12"/>
</dbReference>
<dbReference type="GeneID" id="29097"/>
<dbReference type="KEGG" id="hsa:29097"/>
<dbReference type="MANE-Select" id="ENST00000465271.6">
    <property type="protein sequence ID" value="ENSP00000420443.1"/>
    <property type="RefSeq nucleotide sequence ID" value="NM_014184.4"/>
    <property type="RefSeq protein sequence ID" value="NP_054903.1"/>
</dbReference>
<dbReference type="UCSC" id="uc001hom.3">
    <molecule id="Q9P003-1"/>
    <property type="organism name" value="human"/>
</dbReference>
<dbReference type="AGR" id="HGNC:25013"/>
<dbReference type="CTD" id="29097"/>
<dbReference type="DisGeNET" id="29097"/>
<dbReference type="GeneCards" id="CNIH4"/>
<dbReference type="HGNC" id="HGNC:25013">
    <property type="gene designation" value="CNIH4"/>
</dbReference>
<dbReference type="HPA" id="ENSG00000143771">
    <property type="expression patterns" value="Low tissue specificity"/>
</dbReference>
<dbReference type="MIM" id="617483">
    <property type="type" value="gene"/>
</dbReference>
<dbReference type="neXtProt" id="NX_Q9P003"/>
<dbReference type="OpenTargets" id="ENSG00000143771"/>
<dbReference type="PharmGKB" id="PA142672091"/>
<dbReference type="VEuPathDB" id="HostDB:ENSG00000143771"/>
<dbReference type="eggNOG" id="KOG2729">
    <property type="taxonomic scope" value="Eukaryota"/>
</dbReference>
<dbReference type="GeneTree" id="ENSGT00950000182834"/>
<dbReference type="HOGENOM" id="CLU_112942_0_1_1"/>
<dbReference type="InParanoid" id="Q9P003"/>
<dbReference type="OMA" id="HKKECFI"/>
<dbReference type="OrthoDB" id="8775810at2759"/>
<dbReference type="PAN-GO" id="Q9P003">
    <property type="GO annotations" value="3 GO annotations based on evolutionary models"/>
</dbReference>
<dbReference type="PhylomeDB" id="Q9P003"/>
<dbReference type="TreeFam" id="TF300083"/>
<dbReference type="PathwayCommons" id="Q9P003"/>
<dbReference type="SignaLink" id="Q9P003"/>
<dbReference type="BioGRID-ORCS" id="29097">
    <property type="hits" value="357 hits in 1169 CRISPR screens"/>
</dbReference>
<dbReference type="ChiTaRS" id="CNIH4">
    <property type="organism name" value="human"/>
</dbReference>
<dbReference type="GeneWiki" id="CNIH4"/>
<dbReference type="GenomeRNAi" id="29097"/>
<dbReference type="Pharos" id="Q9P003">
    <property type="development level" value="Tbio"/>
</dbReference>
<dbReference type="PRO" id="PR:Q9P003"/>
<dbReference type="Proteomes" id="UP000005640">
    <property type="component" value="Chromosome 1"/>
</dbReference>
<dbReference type="RNAct" id="Q9P003">
    <property type="molecule type" value="protein"/>
</dbReference>
<dbReference type="Bgee" id="ENSG00000143771">
    <property type="expression patterns" value="Expressed in jejunal mucosa and 212 other cell types or tissues"/>
</dbReference>
<dbReference type="ExpressionAtlas" id="Q9P003">
    <property type="expression patterns" value="baseline and differential"/>
</dbReference>
<dbReference type="GO" id="GO:0030134">
    <property type="term" value="C:COPII-coated ER to Golgi transport vesicle"/>
    <property type="evidence" value="ECO:0000318"/>
    <property type="project" value="GO_Central"/>
</dbReference>
<dbReference type="GO" id="GO:0005783">
    <property type="term" value="C:endoplasmic reticulum"/>
    <property type="evidence" value="ECO:0000314"/>
    <property type="project" value="UniProtKB"/>
</dbReference>
<dbReference type="GO" id="GO:0005789">
    <property type="term" value="C:endoplasmic reticulum membrane"/>
    <property type="evidence" value="ECO:0000318"/>
    <property type="project" value="GO_Central"/>
</dbReference>
<dbReference type="GO" id="GO:0005793">
    <property type="term" value="C:endoplasmic reticulum-Golgi intermediate compartment"/>
    <property type="evidence" value="ECO:0000314"/>
    <property type="project" value="UniProtKB"/>
</dbReference>
<dbReference type="GO" id="GO:0031730">
    <property type="term" value="F:CCR5 chemokine receptor binding"/>
    <property type="evidence" value="ECO:0000353"/>
    <property type="project" value="UniProtKB"/>
</dbReference>
<dbReference type="GO" id="GO:0005102">
    <property type="term" value="F:signaling receptor binding"/>
    <property type="evidence" value="ECO:0000318"/>
    <property type="project" value="GO_Central"/>
</dbReference>
<dbReference type="GO" id="GO:0006888">
    <property type="term" value="P:endoplasmic reticulum to Golgi vesicle-mediated transport"/>
    <property type="evidence" value="ECO:0000315"/>
    <property type="project" value="UniProtKB"/>
</dbReference>
<dbReference type="GO" id="GO:0015031">
    <property type="term" value="P:protein transport"/>
    <property type="evidence" value="ECO:0007669"/>
    <property type="project" value="UniProtKB-KW"/>
</dbReference>
<dbReference type="InterPro" id="IPR003377">
    <property type="entry name" value="Cornichon"/>
</dbReference>
<dbReference type="PANTHER" id="PTHR12290">
    <property type="entry name" value="CORNICHON-RELATED"/>
    <property type="match status" value="1"/>
</dbReference>
<dbReference type="Pfam" id="PF03311">
    <property type="entry name" value="Cornichon"/>
    <property type="match status" value="1"/>
</dbReference>
<dbReference type="SMART" id="SM01398">
    <property type="entry name" value="Cornichon"/>
    <property type="match status" value="1"/>
</dbReference>
<accession>Q9P003</accession>
<accession>A8K1Q8</accession>
<accession>B2R553</accession>
<accession>Q9H0X8</accession>
<keyword id="KW-0025">Alternative splicing</keyword>
<keyword id="KW-0256">Endoplasmic reticulum</keyword>
<keyword id="KW-0931">ER-Golgi transport</keyword>
<keyword id="KW-0472">Membrane</keyword>
<keyword id="KW-0653">Protein transport</keyword>
<keyword id="KW-1267">Proteomics identification</keyword>
<keyword id="KW-1185">Reference proteome</keyword>
<keyword id="KW-0812">Transmembrane</keyword>
<keyword id="KW-1133">Transmembrane helix</keyword>
<keyword id="KW-0813">Transport</keyword>
<organism>
    <name type="scientific">Homo sapiens</name>
    <name type="common">Human</name>
    <dbReference type="NCBI Taxonomy" id="9606"/>
    <lineage>
        <taxon>Eukaryota</taxon>
        <taxon>Metazoa</taxon>
        <taxon>Chordata</taxon>
        <taxon>Craniata</taxon>
        <taxon>Vertebrata</taxon>
        <taxon>Euteleostomi</taxon>
        <taxon>Mammalia</taxon>
        <taxon>Eutheria</taxon>
        <taxon>Euarchontoglires</taxon>
        <taxon>Primates</taxon>
        <taxon>Haplorrhini</taxon>
        <taxon>Catarrhini</taxon>
        <taxon>Hominidae</taxon>
        <taxon>Homo</taxon>
    </lineage>
</organism>
<comment type="function">
    <text evidence="2">Involved in G protein-coupled receptors (GPCRs) trafficking from the endoplasmic reticulum to the cell surface; it promotes the exit of GPCRs from the early secretory pathway, likely through interaction with the COPII machinery (PubMed:24405750).</text>
</comment>
<comment type="subunit">
    <text evidence="2">Interacts with Sec23/24 complex components SEC24B and SEC24D (PubMed:24405750). Interacts with CCR5 (PubMed:24405750). Interacts with ADRB2 in the early secretory pathway (PubMed:24405750).</text>
</comment>
<comment type="interaction">
    <interactant intactId="EBI-1044341">
        <id>Q9P003</id>
    </interactant>
    <interactant intactId="EBI-10178951">
        <id>O00155</id>
        <label>GPR25</label>
    </interactant>
    <organismsDiffer>false</organismsDiffer>
    <experiments>3</experiments>
</comment>
<comment type="interaction">
    <interactant intactId="EBI-1044341">
        <id>Q9P003</id>
    </interactant>
    <interactant intactId="EBI-8638294">
        <id>Q9NUH8</id>
        <label>TMEM14B</label>
    </interactant>
    <organismsDiffer>false</organismsDiffer>
    <experiments>3</experiments>
</comment>
<comment type="interaction">
    <interactant intactId="EBI-1044341">
        <id>Q9P003</id>
    </interactant>
    <interactant intactId="EBI-12003468">
        <id>A0AVG3</id>
        <label>TSNARE1</label>
    </interactant>
    <organismsDiffer>false</organismsDiffer>
    <experiments>3</experiments>
</comment>
<comment type="subcellular location">
    <subcellularLocation>
        <location evidence="5">Membrane</location>
        <topology evidence="5">Multi-pass membrane protein</topology>
    </subcellularLocation>
    <subcellularLocation>
        <location evidence="2">Endoplasmic reticulum</location>
    </subcellularLocation>
    <subcellularLocation>
        <location evidence="2">Endoplasmic reticulum-Golgi intermediate compartment</location>
    </subcellularLocation>
</comment>
<comment type="alternative products">
    <event type="alternative splicing"/>
    <isoform>
        <id>Q9P003-1</id>
        <name>1</name>
        <sequence type="displayed"/>
    </isoform>
    <isoform>
        <id>Q9P003-2</id>
        <name>2</name>
        <sequence type="described" ref="VSP_013466"/>
    </isoform>
</comment>
<comment type="similarity">
    <text evidence="5">Belongs to the cornichon family.</text>
</comment>
<protein>
    <recommendedName>
        <fullName>Protein cornichon homolog 4</fullName>
        <shortName>CNIH-4</shortName>
    </recommendedName>
    <alternativeName>
        <fullName>Cornichon family AMPA receptor auxiliary protein 4</fullName>
    </alternativeName>
</protein>